<gene>
    <name evidence="1" type="primary">coaX</name>
    <name type="ordered locus">HPAG1_0845</name>
</gene>
<dbReference type="EC" id="2.7.1.33" evidence="1"/>
<dbReference type="EMBL" id="CP000241">
    <property type="protein sequence ID" value="ABF84912.1"/>
    <property type="molecule type" value="Genomic_DNA"/>
</dbReference>
<dbReference type="RefSeq" id="WP_001111566.1">
    <property type="nucleotide sequence ID" value="NC_008086.1"/>
</dbReference>
<dbReference type="SMR" id="Q1CT10"/>
<dbReference type="KEGG" id="hpa:HPAG1_0845"/>
<dbReference type="HOGENOM" id="CLU_1213471_0_0_7"/>
<dbReference type="UniPathway" id="UPA00241">
    <property type="reaction ID" value="UER00352"/>
</dbReference>
<dbReference type="GO" id="GO:0005737">
    <property type="term" value="C:cytoplasm"/>
    <property type="evidence" value="ECO:0007669"/>
    <property type="project" value="UniProtKB-SubCell"/>
</dbReference>
<dbReference type="GO" id="GO:0005524">
    <property type="term" value="F:ATP binding"/>
    <property type="evidence" value="ECO:0007669"/>
    <property type="project" value="UniProtKB-UniRule"/>
</dbReference>
<dbReference type="GO" id="GO:0046872">
    <property type="term" value="F:metal ion binding"/>
    <property type="evidence" value="ECO:0007669"/>
    <property type="project" value="UniProtKB-KW"/>
</dbReference>
<dbReference type="GO" id="GO:0004594">
    <property type="term" value="F:pantothenate kinase activity"/>
    <property type="evidence" value="ECO:0007669"/>
    <property type="project" value="UniProtKB-UniRule"/>
</dbReference>
<dbReference type="GO" id="GO:0015937">
    <property type="term" value="P:coenzyme A biosynthetic process"/>
    <property type="evidence" value="ECO:0007669"/>
    <property type="project" value="UniProtKB-UniRule"/>
</dbReference>
<dbReference type="CDD" id="cd24015">
    <property type="entry name" value="ASKHA_NBD_PanK-III"/>
    <property type="match status" value="1"/>
</dbReference>
<dbReference type="Gene3D" id="3.30.420.40">
    <property type="match status" value="2"/>
</dbReference>
<dbReference type="HAMAP" id="MF_01274">
    <property type="entry name" value="Pantothen_kinase_3"/>
    <property type="match status" value="1"/>
</dbReference>
<dbReference type="InterPro" id="IPR043129">
    <property type="entry name" value="ATPase_NBD"/>
</dbReference>
<dbReference type="InterPro" id="IPR004619">
    <property type="entry name" value="Type_III_PanK"/>
</dbReference>
<dbReference type="NCBIfam" id="TIGR00671">
    <property type="entry name" value="baf"/>
    <property type="match status" value="1"/>
</dbReference>
<dbReference type="NCBIfam" id="NF009872">
    <property type="entry name" value="PRK13333.1"/>
    <property type="match status" value="1"/>
</dbReference>
<dbReference type="PANTHER" id="PTHR34265">
    <property type="entry name" value="TYPE III PANTOTHENATE KINASE"/>
    <property type="match status" value="1"/>
</dbReference>
<dbReference type="PANTHER" id="PTHR34265:SF1">
    <property type="entry name" value="TYPE III PANTOTHENATE KINASE"/>
    <property type="match status" value="1"/>
</dbReference>
<dbReference type="Pfam" id="PF03309">
    <property type="entry name" value="Pan_kinase"/>
    <property type="match status" value="1"/>
</dbReference>
<dbReference type="SUPFAM" id="SSF53067">
    <property type="entry name" value="Actin-like ATPase domain"/>
    <property type="match status" value="2"/>
</dbReference>
<feature type="chain" id="PRO_0000267546" description="Type III pantothenate kinase">
    <location>
        <begin position="1"/>
        <end position="223"/>
    </location>
</feature>
<feature type="active site" description="Proton acceptor" evidence="1">
    <location>
        <position position="87"/>
    </location>
</feature>
<feature type="binding site" evidence="1">
    <location>
        <begin position="17"/>
        <end position="24"/>
    </location>
    <ligand>
        <name>ATP</name>
        <dbReference type="ChEBI" id="CHEBI:30616"/>
    </ligand>
</feature>
<feature type="binding site" evidence="1">
    <location>
        <position position="81"/>
    </location>
    <ligand>
        <name>substrate</name>
    </ligand>
</feature>
<feature type="binding site" evidence="1">
    <location>
        <begin position="85"/>
        <end position="88"/>
    </location>
    <ligand>
        <name>substrate</name>
    </ligand>
</feature>
<feature type="binding site" evidence="1">
    <location>
        <position position="102"/>
    </location>
    <ligand>
        <name>K(+)</name>
        <dbReference type="ChEBI" id="CHEBI:29103"/>
    </ligand>
</feature>
<feature type="binding site" evidence="1">
    <location>
        <position position="105"/>
    </location>
    <ligand>
        <name>ATP</name>
        <dbReference type="ChEBI" id="CHEBI:30616"/>
    </ligand>
</feature>
<feature type="binding site" evidence="1">
    <location>
        <position position="157"/>
    </location>
    <ligand>
        <name>substrate</name>
    </ligand>
</feature>
<evidence type="ECO:0000255" key="1">
    <source>
        <dbReference type="HAMAP-Rule" id="MF_01274"/>
    </source>
</evidence>
<comment type="function">
    <text evidence="1">Catalyzes the phosphorylation of pantothenate (Pan), the first step in CoA biosynthesis.</text>
</comment>
<comment type="catalytic activity">
    <reaction evidence="1">
        <text>(R)-pantothenate + ATP = (R)-4'-phosphopantothenate + ADP + H(+)</text>
        <dbReference type="Rhea" id="RHEA:16373"/>
        <dbReference type="ChEBI" id="CHEBI:10986"/>
        <dbReference type="ChEBI" id="CHEBI:15378"/>
        <dbReference type="ChEBI" id="CHEBI:29032"/>
        <dbReference type="ChEBI" id="CHEBI:30616"/>
        <dbReference type="ChEBI" id="CHEBI:456216"/>
        <dbReference type="EC" id="2.7.1.33"/>
    </reaction>
</comment>
<comment type="cofactor">
    <cofactor evidence="1">
        <name>NH4(+)</name>
        <dbReference type="ChEBI" id="CHEBI:28938"/>
    </cofactor>
    <cofactor evidence="1">
        <name>K(+)</name>
        <dbReference type="ChEBI" id="CHEBI:29103"/>
    </cofactor>
    <text evidence="1">A monovalent cation. Ammonium or potassium.</text>
</comment>
<comment type="pathway">
    <text evidence="1">Cofactor biosynthesis; coenzyme A biosynthesis; CoA from (R)-pantothenate: step 1/5.</text>
</comment>
<comment type="subunit">
    <text evidence="1">Homodimer.</text>
</comment>
<comment type="subcellular location">
    <subcellularLocation>
        <location evidence="1">Cytoplasm</location>
    </subcellularLocation>
</comment>
<comment type="similarity">
    <text evidence="1">Belongs to the type III pantothenate kinase family.</text>
</comment>
<protein>
    <recommendedName>
        <fullName evidence="1">Type III pantothenate kinase</fullName>
        <ecNumber evidence="1">2.7.1.33</ecNumber>
    </recommendedName>
    <alternativeName>
        <fullName evidence="1">PanK-III</fullName>
    </alternativeName>
    <alternativeName>
        <fullName evidence="1">Pantothenic acid kinase</fullName>
    </alternativeName>
</protein>
<name>COAX_HELPH</name>
<accession>Q1CT10</accession>
<organism>
    <name type="scientific">Helicobacter pylori (strain HPAG1)</name>
    <dbReference type="NCBI Taxonomy" id="357544"/>
    <lineage>
        <taxon>Bacteria</taxon>
        <taxon>Pseudomonadati</taxon>
        <taxon>Campylobacterota</taxon>
        <taxon>Epsilonproteobacteria</taxon>
        <taxon>Campylobacterales</taxon>
        <taxon>Helicobacteraceae</taxon>
        <taxon>Helicobacter</taxon>
    </lineage>
</organism>
<sequence length="223" mass="24737">MPARQSFTDLKNLVLCDIGNTHIHFAQNYQLFSSAKEDLKRLGIQKEIFYISVNEENEKALLNCYPNAKNIAGFFHLETDYIGLGIDRQMACLAVNNGVVVDAGSAITIDLVKEGKHLGGCILPGLAQYIHAYKKSAKILEQPFKTLDSLEILPKNTRDAVNYGMILSVISCIQHLAKNQKIYLCGGDAKYLSAFLPHSVCKERLVFDGMEIALKKAGILECK</sequence>
<reference key="1">
    <citation type="journal article" date="2006" name="Proc. Natl. Acad. Sci. U.S.A.">
        <title>The complete genome sequence of a chronic atrophic gastritis Helicobacter pylori strain: evolution during disease progression.</title>
        <authorList>
            <person name="Oh J.D."/>
            <person name="Kling-Baeckhed H."/>
            <person name="Giannakis M."/>
            <person name="Xu J."/>
            <person name="Fulton R.S."/>
            <person name="Fulton L.A."/>
            <person name="Cordum H.S."/>
            <person name="Wang C."/>
            <person name="Elliott G."/>
            <person name="Edwards J."/>
            <person name="Mardis E.R."/>
            <person name="Engstrand L.G."/>
            <person name="Gordon J.I."/>
        </authorList>
    </citation>
    <scope>NUCLEOTIDE SEQUENCE [LARGE SCALE GENOMIC DNA]</scope>
    <source>
        <strain>HPAG1</strain>
    </source>
</reference>
<keyword id="KW-0067">ATP-binding</keyword>
<keyword id="KW-0173">Coenzyme A biosynthesis</keyword>
<keyword id="KW-0963">Cytoplasm</keyword>
<keyword id="KW-0418">Kinase</keyword>
<keyword id="KW-0479">Metal-binding</keyword>
<keyword id="KW-0547">Nucleotide-binding</keyword>
<keyword id="KW-0630">Potassium</keyword>
<keyword id="KW-0808">Transferase</keyword>
<proteinExistence type="inferred from homology"/>